<evidence type="ECO:0000250" key="1"/>
<evidence type="ECO:0000255" key="2"/>
<evidence type="ECO:0000305" key="3"/>
<comment type="function">
    <text evidence="1">F(1)F(0) ATP synthase produces ATP from ADP in the presence of a proton or sodium gradient. F-type ATPases consist of two structural domains, F(1) containing the extramembraneous catalytic core and F(0) containing the membrane proton channel, linked together by a central stalk and a peripheral stalk. During catalysis, ATP synthesis in the catalytic domain of F(1) is coupled via a rotary mechanism of the central stalk subunits to proton translocation (By similarity).</text>
</comment>
<comment type="function">
    <text evidence="1">Component of the F(0) channel, it forms part of the peripheral stalk, linking F(1) to F(0). The b'-subunit is a diverged and duplicated form of b found in plants and photosynthetic bacteria (By similarity).</text>
</comment>
<comment type="subunit">
    <text evidence="1">F-type ATPases have 2 components, F(1) - the catalytic core - and F(0) - the membrane proton channel. F(1) has five subunits: alpha(3), beta(3), gamma(1), delta(1), epsilon(1). F(0) has three main subunits: a(1), b(2) and c(10-14). The alpha and beta chains form an alternating ring which encloses part of the gamma chain. F(1) is attached to F(0) by a central stalk formed by the gamma and epsilon chains, while a peripheral stalk is formed by the delta and b chains (By similarity).</text>
</comment>
<comment type="subcellular location">
    <subcellularLocation>
        <location evidence="1">Cell inner membrane</location>
        <topology evidence="1">Single-pass membrane protein</topology>
    </subcellularLocation>
</comment>
<comment type="similarity">
    <text evidence="3">Belongs to the ATPase B chain family.</text>
</comment>
<dbReference type="EMBL" id="CP000613">
    <property type="protein sequence ID" value="ACJ00870.1"/>
    <property type="molecule type" value="Genomic_DNA"/>
</dbReference>
<dbReference type="SMR" id="B6IX46"/>
<dbReference type="STRING" id="414684.RC1_3512"/>
<dbReference type="KEGG" id="rce:RC1_3512"/>
<dbReference type="eggNOG" id="COG0711">
    <property type="taxonomic scope" value="Bacteria"/>
</dbReference>
<dbReference type="HOGENOM" id="CLU_079215_1_2_5"/>
<dbReference type="OrthoDB" id="9805716at2"/>
<dbReference type="Proteomes" id="UP000001591">
    <property type="component" value="Chromosome"/>
</dbReference>
<dbReference type="GO" id="GO:0005886">
    <property type="term" value="C:plasma membrane"/>
    <property type="evidence" value="ECO:0007669"/>
    <property type="project" value="UniProtKB-SubCell"/>
</dbReference>
<dbReference type="GO" id="GO:0045259">
    <property type="term" value="C:proton-transporting ATP synthase complex"/>
    <property type="evidence" value="ECO:0007669"/>
    <property type="project" value="UniProtKB-KW"/>
</dbReference>
<dbReference type="GO" id="GO:0046933">
    <property type="term" value="F:proton-transporting ATP synthase activity, rotational mechanism"/>
    <property type="evidence" value="ECO:0007669"/>
    <property type="project" value="UniProtKB-UniRule"/>
</dbReference>
<dbReference type="GO" id="GO:0046961">
    <property type="term" value="F:proton-transporting ATPase activity, rotational mechanism"/>
    <property type="evidence" value="ECO:0007669"/>
    <property type="project" value="TreeGrafter"/>
</dbReference>
<dbReference type="CDD" id="cd06503">
    <property type="entry name" value="ATP-synt_Fo_b"/>
    <property type="match status" value="1"/>
</dbReference>
<dbReference type="Gene3D" id="6.10.250.1580">
    <property type="match status" value="1"/>
</dbReference>
<dbReference type="HAMAP" id="MF_01398">
    <property type="entry name" value="ATP_synth_b_bprime"/>
    <property type="match status" value="1"/>
</dbReference>
<dbReference type="InterPro" id="IPR002146">
    <property type="entry name" value="ATP_synth_b/b'su_bac/chlpt"/>
</dbReference>
<dbReference type="InterPro" id="IPR050059">
    <property type="entry name" value="ATP_synthase_B_chain"/>
</dbReference>
<dbReference type="PANTHER" id="PTHR33445:SF1">
    <property type="entry name" value="ATP SYNTHASE SUBUNIT B"/>
    <property type="match status" value="1"/>
</dbReference>
<dbReference type="PANTHER" id="PTHR33445">
    <property type="entry name" value="ATP SYNTHASE SUBUNIT B', CHLOROPLASTIC"/>
    <property type="match status" value="1"/>
</dbReference>
<dbReference type="Pfam" id="PF00430">
    <property type="entry name" value="ATP-synt_B"/>
    <property type="match status" value="1"/>
</dbReference>
<reference key="1">
    <citation type="submission" date="2007-03" db="EMBL/GenBank/DDBJ databases">
        <title>Genome sequence of Rhodospirillum centenum.</title>
        <authorList>
            <person name="Touchman J.W."/>
            <person name="Bauer C."/>
            <person name="Blankenship R.E."/>
        </authorList>
    </citation>
    <scope>NUCLEOTIDE SEQUENCE [LARGE SCALE GENOMIC DNA]</scope>
    <source>
        <strain>ATCC 51521 / SW</strain>
    </source>
</reference>
<name>ATPF2_RHOCS</name>
<feature type="chain" id="PRO_0000369045" description="ATP synthase subunit b 2">
    <location>
        <begin position="1"/>
        <end position="204"/>
    </location>
</feature>
<feature type="transmembrane region" description="Helical" evidence="2">
    <location>
        <begin position="50"/>
        <end position="70"/>
    </location>
</feature>
<accession>B6IX46</accession>
<proteinExistence type="inferred from homology"/>
<organism>
    <name type="scientific">Rhodospirillum centenum (strain ATCC 51521 / SW)</name>
    <dbReference type="NCBI Taxonomy" id="414684"/>
    <lineage>
        <taxon>Bacteria</taxon>
        <taxon>Pseudomonadati</taxon>
        <taxon>Pseudomonadota</taxon>
        <taxon>Alphaproteobacteria</taxon>
        <taxon>Rhodospirillales</taxon>
        <taxon>Rhodospirillaceae</taxon>
        <taxon>Rhodospirillum</taxon>
    </lineage>
</organism>
<keyword id="KW-0066">ATP synthesis</keyword>
<keyword id="KW-0997">Cell inner membrane</keyword>
<keyword id="KW-1003">Cell membrane</keyword>
<keyword id="KW-0138">CF(0)</keyword>
<keyword id="KW-0375">Hydrogen ion transport</keyword>
<keyword id="KW-0406">Ion transport</keyword>
<keyword id="KW-0472">Membrane</keyword>
<keyword id="KW-1185">Reference proteome</keyword>
<keyword id="KW-0812">Transmembrane</keyword>
<keyword id="KW-1133">Transmembrane helix</keyword>
<keyword id="KW-0813">Transport</keyword>
<protein>
    <recommendedName>
        <fullName>ATP synthase subunit b 2</fullName>
    </recommendedName>
    <alternativeName>
        <fullName>ATP synthase F(0) sector subunit b 2</fullName>
    </alternativeName>
    <alternativeName>
        <fullName>ATPase subunit I 2</fullName>
    </alternativeName>
    <alternativeName>
        <fullName>F-type ATPase subunit b 2</fullName>
        <shortName>F-ATPase subunit b 2</shortName>
    </alternativeName>
</protein>
<sequence length="204" mass="21509">MTQEVAPPAAAQDDAHGTAEHIAEGVAAETAEHAKGGLPQLNPDTYPTQIFWLAVTFGLLLFLMSKVALPRVAEVLEARQEKIADDLDRAGALKAEADAVIENYERELAEARAKAQKVLSDATLAAESETTQRLGELAADLAERARAAEARIEQARRAALGNIRGVAAETAVAAAAKLAGLDLDPATAEAAVEEALNRVRQEVV</sequence>
<gene>
    <name type="primary">atpF2</name>
    <name type="synonym">atpG</name>
    <name type="ordered locus">RC1_3512</name>
</gene>